<keyword id="KW-0067">ATP-binding</keyword>
<keyword id="KW-0963">Cytoplasm</keyword>
<keyword id="KW-0227">DNA damage</keyword>
<keyword id="KW-0228">DNA excision</keyword>
<keyword id="KW-0234">DNA repair</keyword>
<keyword id="KW-0267">Excision nuclease</keyword>
<keyword id="KW-0547">Nucleotide-binding</keyword>
<keyword id="KW-0742">SOS response</keyword>
<reference key="1">
    <citation type="journal article" date="2001" name="Science">
        <title>Comparative genomics of Listeria species.</title>
        <authorList>
            <person name="Glaser P."/>
            <person name="Frangeul L."/>
            <person name="Buchrieser C."/>
            <person name="Rusniok C."/>
            <person name="Amend A."/>
            <person name="Baquero F."/>
            <person name="Berche P."/>
            <person name="Bloecker H."/>
            <person name="Brandt P."/>
            <person name="Chakraborty T."/>
            <person name="Charbit A."/>
            <person name="Chetouani F."/>
            <person name="Couve E."/>
            <person name="de Daruvar A."/>
            <person name="Dehoux P."/>
            <person name="Domann E."/>
            <person name="Dominguez-Bernal G."/>
            <person name="Duchaud E."/>
            <person name="Durant L."/>
            <person name="Dussurget O."/>
            <person name="Entian K.-D."/>
            <person name="Fsihi H."/>
            <person name="Garcia-del Portillo F."/>
            <person name="Garrido P."/>
            <person name="Gautier L."/>
            <person name="Goebel W."/>
            <person name="Gomez-Lopez N."/>
            <person name="Hain T."/>
            <person name="Hauf J."/>
            <person name="Jackson D."/>
            <person name="Jones L.-M."/>
            <person name="Kaerst U."/>
            <person name="Kreft J."/>
            <person name="Kuhn M."/>
            <person name="Kunst F."/>
            <person name="Kurapkat G."/>
            <person name="Madueno E."/>
            <person name="Maitournam A."/>
            <person name="Mata Vicente J."/>
            <person name="Ng E."/>
            <person name="Nedjari H."/>
            <person name="Nordsiek G."/>
            <person name="Novella S."/>
            <person name="de Pablos B."/>
            <person name="Perez-Diaz J.-C."/>
            <person name="Purcell R."/>
            <person name="Remmel B."/>
            <person name="Rose M."/>
            <person name="Schlueter T."/>
            <person name="Simoes N."/>
            <person name="Tierrez A."/>
            <person name="Vazquez-Boland J.-A."/>
            <person name="Voss H."/>
            <person name="Wehland J."/>
            <person name="Cossart P."/>
        </authorList>
    </citation>
    <scope>NUCLEOTIDE SEQUENCE [LARGE SCALE GENOMIC DNA]</scope>
    <source>
        <strain>ATCC BAA-680 / CLIP 11262</strain>
    </source>
</reference>
<name>UVRB_LISIN</name>
<feature type="chain" id="PRO_0000138403" description="UvrABC system protein B">
    <location>
        <begin position="1"/>
        <end position="658"/>
    </location>
</feature>
<feature type="domain" description="Helicase ATP-binding" evidence="1">
    <location>
        <begin position="26"/>
        <end position="414"/>
    </location>
</feature>
<feature type="domain" description="Helicase C-terminal" evidence="1">
    <location>
        <begin position="430"/>
        <end position="592"/>
    </location>
</feature>
<feature type="domain" description="UVR" evidence="1">
    <location>
        <begin position="622"/>
        <end position="658"/>
    </location>
</feature>
<feature type="short sequence motif" description="Beta-hairpin">
    <location>
        <begin position="92"/>
        <end position="115"/>
    </location>
</feature>
<feature type="binding site" evidence="1">
    <location>
        <begin position="39"/>
        <end position="46"/>
    </location>
    <ligand>
        <name>ATP</name>
        <dbReference type="ChEBI" id="CHEBI:30616"/>
    </ligand>
</feature>
<sequence length="658" mass="75616">MKDKFELVSKYSPQGDQPRAIEQLVAGLKKGLKHQTLLGATGTGKTFTVSNVIQEVNKPTLVMAHNKTLAGQLYSEFKEFFPNNAVEYFVSYYDYYQPEAYVPQSDTYIEKDASINDEIDKLRHSATAALFERRDVIIIASVSCIYGLGSPVEYGEMLVSLRVGMEISRDQLLRKLVDIQYDRNDIDFQRGRFRVRGDVVEIFPASRDEHCMRIEFFGDEIERIREVDALTGEIIGDREHVSIFPASHFVTRPDIMKKAIVNIKAELEDRLKVLRAENKLLEAQRLEQRTNYDIEMMEEMGYCSGIENYSRHLSLRPAGVTPYTLLDYFPDDFQIVIDESHVTMPQIRGMFNGDQARKQMLVDHGFRLPSALDNRPLRLEEFEKHINQIMFISATPGPYELEKNPDVIEQIIRPTGLLDPIVEIRPIQGQIDDLMDEINDRVEKNERVLITTLTKKMSEDLTNYLKEAGVKVQYLHSEVKTLERIEIIRDLRLGVYDVIVGINLLREGIDLPEVSLVAILDADKEGFLRSERSLIQTMGRAARNENGRVIMYADKMTDSMRNSISETERRRKIQIEYNEKHGITPKTIRKEIRGIIAATSAADEREAIKQHDLSKMSKKERDIFIEGMEHEMKEAAKALDFERAAELRDALLEIKAEG</sequence>
<proteinExistence type="inferred from homology"/>
<organism>
    <name type="scientific">Listeria innocua serovar 6a (strain ATCC BAA-680 / CLIP 11262)</name>
    <dbReference type="NCBI Taxonomy" id="272626"/>
    <lineage>
        <taxon>Bacteria</taxon>
        <taxon>Bacillati</taxon>
        <taxon>Bacillota</taxon>
        <taxon>Bacilli</taxon>
        <taxon>Bacillales</taxon>
        <taxon>Listeriaceae</taxon>
        <taxon>Listeria</taxon>
    </lineage>
</organism>
<comment type="function">
    <text evidence="1">The UvrABC repair system catalyzes the recognition and processing of DNA lesions. A damage recognition complex composed of 2 UvrA and 2 UvrB subunits scans DNA for abnormalities. Upon binding of the UvrA(2)B(2) complex to a putative damaged site, the DNA wraps around one UvrB monomer. DNA wrap is dependent on ATP binding by UvrB and probably causes local melting of the DNA helix, facilitating insertion of UvrB beta-hairpin between the DNA strands. Then UvrB probes one DNA strand for the presence of a lesion. If a lesion is found the UvrA subunits dissociate and the UvrB-DNA preincision complex is formed. This complex is subsequently bound by UvrC and the second UvrB is released. If no lesion is found, the DNA wraps around the other UvrB subunit that will check the other stand for damage.</text>
</comment>
<comment type="subunit">
    <text evidence="1">Forms a heterotetramer with UvrA during the search for lesions. Interacts with UvrC in an incision complex.</text>
</comment>
<comment type="subcellular location">
    <subcellularLocation>
        <location evidence="1">Cytoplasm</location>
    </subcellularLocation>
</comment>
<comment type="domain">
    <text evidence="1">The beta-hairpin motif is involved in DNA binding.</text>
</comment>
<comment type="similarity">
    <text evidence="1">Belongs to the UvrB family.</text>
</comment>
<evidence type="ECO:0000255" key="1">
    <source>
        <dbReference type="HAMAP-Rule" id="MF_00204"/>
    </source>
</evidence>
<protein>
    <recommendedName>
        <fullName evidence="1">UvrABC system protein B</fullName>
        <shortName evidence="1">Protein UvrB</shortName>
    </recommendedName>
    <alternativeName>
        <fullName evidence="1">Excinuclease ABC subunit B</fullName>
    </alternativeName>
</protein>
<dbReference type="EMBL" id="AL596173">
    <property type="protein sequence ID" value="CAC97859.1"/>
    <property type="molecule type" value="Genomic_DNA"/>
</dbReference>
<dbReference type="PIR" id="AC1761">
    <property type="entry name" value="AC1761"/>
</dbReference>
<dbReference type="RefSeq" id="WP_010991310.1">
    <property type="nucleotide sequence ID" value="NC_003212.1"/>
</dbReference>
<dbReference type="SMR" id="Q928A4"/>
<dbReference type="STRING" id="272626.gene:17567013"/>
<dbReference type="GeneID" id="93235896"/>
<dbReference type="KEGG" id="lin:uvrB"/>
<dbReference type="eggNOG" id="COG0556">
    <property type="taxonomic scope" value="Bacteria"/>
</dbReference>
<dbReference type="HOGENOM" id="CLU_009621_2_1_9"/>
<dbReference type="OrthoDB" id="9806651at2"/>
<dbReference type="Proteomes" id="UP000002513">
    <property type="component" value="Chromosome"/>
</dbReference>
<dbReference type="GO" id="GO:0005737">
    <property type="term" value="C:cytoplasm"/>
    <property type="evidence" value="ECO:0007669"/>
    <property type="project" value="UniProtKB-SubCell"/>
</dbReference>
<dbReference type="GO" id="GO:0009380">
    <property type="term" value="C:excinuclease repair complex"/>
    <property type="evidence" value="ECO:0007669"/>
    <property type="project" value="InterPro"/>
</dbReference>
<dbReference type="GO" id="GO:0005524">
    <property type="term" value="F:ATP binding"/>
    <property type="evidence" value="ECO:0007669"/>
    <property type="project" value="UniProtKB-UniRule"/>
</dbReference>
<dbReference type="GO" id="GO:0016887">
    <property type="term" value="F:ATP hydrolysis activity"/>
    <property type="evidence" value="ECO:0007669"/>
    <property type="project" value="InterPro"/>
</dbReference>
<dbReference type="GO" id="GO:0003677">
    <property type="term" value="F:DNA binding"/>
    <property type="evidence" value="ECO:0007669"/>
    <property type="project" value="UniProtKB-UniRule"/>
</dbReference>
<dbReference type="GO" id="GO:0009381">
    <property type="term" value="F:excinuclease ABC activity"/>
    <property type="evidence" value="ECO:0007669"/>
    <property type="project" value="UniProtKB-UniRule"/>
</dbReference>
<dbReference type="GO" id="GO:0006289">
    <property type="term" value="P:nucleotide-excision repair"/>
    <property type="evidence" value="ECO:0007669"/>
    <property type="project" value="UniProtKB-UniRule"/>
</dbReference>
<dbReference type="GO" id="GO:0009432">
    <property type="term" value="P:SOS response"/>
    <property type="evidence" value="ECO:0007669"/>
    <property type="project" value="UniProtKB-UniRule"/>
</dbReference>
<dbReference type="CDD" id="cd17916">
    <property type="entry name" value="DEXHc_UvrB"/>
    <property type="match status" value="1"/>
</dbReference>
<dbReference type="CDD" id="cd18790">
    <property type="entry name" value="SF2_C_UvrB"/>
    <property type="match status" value="1"/>
</dbReference>
<dbReference type="Gene3D" id="6.10.140.240">
    <property type="match status" value="1"/>
</dbReference>
<dbReference type="Gene3D" id="3.40.50.300">
    <property type="entry name" value="P-loop containing nucleotide triphosphate hydrolases"/>
    <property type="match status" value="3"/>
</dbReference>
<dbReference type="Gene3D" id="4.10.860.10">
    <property type="entry name" value="UVR domain"/>
    <property type="match status" value="1"/>
</dbReference>
<dbReference type="HAMAP" id="MF_00204">
    <property type="entry name" value="UvrB"/>
    <property type="match status" value="1"/>
</dbReference>
<dbReference type="InterPro" id="IPR006935">
    <property type="entry name" value="Helicase/UvrB_N"/>
</dbReference>
<dbReference type="InterPro" id="IPR014001">
    <property type="entry name" value="Helicase_ATP-bd"/>
</dbReference>
<dbReference type="InterPro" id="IPR001650">
    <property type="entry name" value="Helicase_C-like"/>
</dbReference>
<dbReference type="InterPro" id="IPR027417">
    <property type="entry name" value="P-loop_NTPase"/>
</dbReference>
<dbReference type="InterPro" id="IPR001943">
    <property type="entry name" value="UVR_dom"/>
</dbReference>
<dbReference type="InterPro" id="IPR036876">
    <property type="entry name" value="UVR_dom_sf"/>
</dbReference>
<dbReference type="InterPro" id="IPR004807">
    <property type="entry name" value="UvrB"/>
</dbReference>
<dbReference type="InterPro" id="IPR041471">
    <property type="entry name" value="UvrB_inter"/>
</dbReference>
<dbReference type="InterPro" id="IPR024759">
    <property type="entry name" value="UvrB_YAD/RRR_dom"/>
</dbReference>
<dbReference type="NCBIfam" id="NF003673">
    <property type="entry name" value="PRK05298.1"/>
    <property type="match status" value="1"/>
</dbReference>
<dbReference type="NCBIfam" id="TIGR00631">
    <property type="entry name" value="uvrb"/>
    <property type="match status" value="1"/>
</dbReference>
<dbReference type="PANTHER" id="PTHR24029">
    <property type="entry name" value="UVRABC SYSTEM PROTEIN B"/>
    <property type="match status" value="1"/>
</dbReference>
<dbReference type="PANTHER" id="PTHR24029:SF0">
    <property type="entry name" value="UVRABC SYSTEM PROTEIN B"/>
    <property type="match status" value="1"/>
</dbReference>
<dbReference type="Pfam" id="PF00271">
    <property type="entry name" value="Helicase_C"/>
    <property type="match status" value="1"/>
</dbReference>
<dbReference type="Pfam" id="PF04851">
    <property type="entry name" value="ResIII"/>
    <property type="match status" value="1"/>
</dbReference>
<dbReference type="Pfam" id="PF02151">
    <property type="entry name" value="UVR"/>
    <property type="match status" value="1"/>
</dbReference>
<dbReference type="Pfam" id="PF12344">
    <property type="entry name" value="UvrB"/>
    <property type="match status" value="1"/>
</dbReference>
<dbReference type="Pfam" id="PF17757">
    <property type="entry name" value="UvrB_inter"/>
    <property type="match status" value="1"/>
</dbReference>
<dbReference type="SMART" id="SM00487">
    <property type="entry name" value="DEXDc"/>
    <property type="match status" value="1"/>
</dbReference>
<dbReference type="SMART" id="SM00490">
    <property type="entry name" value="HELICc"/>
    <property type="match status" value="1"/>
</dbReference>
<dbReference type="SUPFAM" id="SSF46600">
    <property type="entry name" value="C-terminal UvrC-binding domain of UvrB"/>
    <property type="match status" value="1"/>
</dbReference>
<dbReference type="SUPFAM" id="SSF52540">
    <property type="entry name" value="P-loop containing nucleoside triphosphate hydrolases"/>
    <property type="match status" value="2"/>
</dbReference>
<dbReference type="PROSITE" id="PS51192">
    <property type="entry name" value="HELICASE_ATP_BIND_1"/>
    <property type="match status" value="1"/>
</dbReference>
<dbReference type="PROSITE" id="PS51194">
    <property type="entry name" value="HELICASE_CTER"/>
    <property type="match status" value="1"/>
</dbReference>
<dbReference type="PROSITE" id="PS50151">
    <property type="entry name" value="UVR"/>
    <property type="match status" value="1"/>
</dbReference>
<gene>
    <name evidence="1" type="primary">uvrB</name>
    <name type="ordered locus">lin2632</name>
</gene>
<accession>Q928A4</accession>